<comment type="function">
    <text>Acts as an oxygen store capable of sustaining neuronal activity in an anoxic environment for 5 to 30 minutes.</text>
</comment>
<comment type="subunit">
    <text evidence="2">Homotetramer. Self-associates in the deoxy state. Seems to dissociate upon oxygenation.</text>
</comment>
<comment type="similarity">
    <text evidence="4">Belongs to the globin family.</text>
</comment>
<protein>
    <recommendedName>
        <fullName>Neural hemoglobin</fullName>
        <shortName>NrHb</shortName>
    </recommendedName>
</protein>
<dbReference type="EMBL" id="AF033001">
    <property type="protein sequence ID" value="AAC39125.1"/>
    <property type="molecule type" value="Genomic_DNA"/>
</dbReference>
<dbReference type="PDB" id="1KR7">
    <property type="method" value="X-ray"/>
    <property type="resolution" value="1.50 A"/>
    <property type="chains" value="A=1-110"/>
</dbReference>
<dbReference type="PDB" id="1V07">
    <property type="method" value="X-ray"/>
    <property type="resolution" value="1.70 A"/>
    <property type="chains" value="A=2-110"/>
</dbReference>
<dbReference type="PDB" id="2VYY">
    <property type="method" value="X-ray"/>
    <property type="resolution" value="1.60 A"/>
    <property type="chains" value="A=1-110"/>
</dbReference>
<dbReference type="PDB" id="2VYZ">
    <property type="method" value="X-ray"/>
    <property type="resolution" value="1.80 A"/>
    <property type="chains" value="A=1-110"/>
</dbReference>
<dbReference type="PDB" id="2XKG">
    <property type="method" value="X-ray"/>
    <property type="resolution" value="1.60 A"/>
    <property type="chains" value="A=1-110"/>
</dbReference>
<dbReference type="PDB" id="2XKH">
    <property type="method" value="X-ray"/>
    <property type="resolution" value="2.31 A"/>
    <property type="chains" value="A=1-110"/>
</dbReference>
<dbReference type="PDB" id="2XKI">
    <property type="method" value="X-ray"/>
    <property type="resolution" value="1.30 A"/>
    <property type="chains" value="A=1-110"/>
</dbReference>
<dbReference type="PDB" id="4AVD">
    <property type="method" value="X-ray"/>
    <property type="resolution" value="1.50 A"/>
    <property type="chains" value="A=1-110"/>
</dbReference>
<dbReference type="PDB" id="4AVE">
    <property type="method" value="X-ray"/>
    <property type="resolution" value="1.90 A"/>
    <property type="chains" value="A=1-110"/>
</dbReference>
<dbReference type="PDB" id="4F68">
    <property type="method" value="X-ray"/>
    <property type="resolution" value="1.80 A"/>
    <property type="chains" value="A=1-110"/>
</dbReference>
<dbReference type="PDB" id="4F69">
    <property type="method" value="X-ray"/>
    <property type="resolution" value="1.60 A"/>
    <property type="chains" value="A=1-110"/>
</dbReference>
<dbReference type="PDB" id="4F6B">
    <property type="method" value="X-ray"/>
    <property type="resolution" value="1.64 A"/>
    <property type="chains" value="A=1-110"/>
</dbReference>
<dbReference type="PDB" id="4F6D">
    <property type="method" value="X-ray"/>
    <property type="resolution" value="1.80 A"/>
    <property type="chains" value="A=1-110"/>
</dbReference>
<dbReference type="PDB" id="4F6F">
    <property type="method" value="X-ray"/>
    <property type="resolution" value="1.56 A"/>
    <property type="chains" value="A=1-110"/>
</dbReference>
<dbReference type="PDB" id="4F6G">
    <property type="method" value="X-ray"/>
    <property type="resolution" value="1.64 A"/>
    <property type="chains" value="A=1-110"/>
</dbReference>
<dbReference type="PDB" id="4F6I">
    <property type="method" value="X-ray"/>
    <property type="resolution" value="1.56 A"/>
    <property type="chains" value="A=1-110"/>
</dbReference>
<dbReference type="PDB" id="4F6J">
    <property type="method" value="X-ray"/>
    <property type="resolution" value="1.45 A"/>
    <property type="chains" value="A=1-110"/>
</dbReference>
<dbReference type="PDBsum" id="1KR7"/>
<dbReference type="PDBsum" id="1V07"/>
<dbReference type="PDBsum" id="2VYY"/>
<dbReference type="PDBsum" id="2VYZ"/>
<dbReference type="PDBsum" id="2XKG"/>
<dbReference type="PDBsum" id="2XKH"/>
<dbReference type="PDBsum" id="2XKI"/>
<dbReference type="PDBsum" id="4AVD"/>
<dbReference type="PDBsum" id="4AVE"/>
<dbReference type="PDBsum" id="4F68"/>
<dbReference type="PDBsum" id="4F69"/>
<dbReference type="PDBsum" id="4F6B"/>
<dbReference type="PDBsum" id="4F6D"/>
<dbReference type="PDBsum" id="4F6F"/>
<dbReference type="PDBsum" id="4F6G"/>
<dbReference type="PDBsum" id="4F6I"/>
<dbReference type="PDBsum" id="4F6J"/>
<dbReference type="SMR" id="O76242"/>
<dbReference type="EvolutionaryTrace" id="O76242"/>
<dbReference type="GO" id="GO:0020037">
    <property type="term" value="F:heme binding"/>
    <property type="evidence" value="ECO:0007669"/>
    <property type="project" value="InterPro"/>
</dbReference>
<dbReference type="GO" id="GO:0046872">
    <property type="term" value="F:metal ion binding"/>
    <property type="evidence" value="ECO:0007669"/>
    <property type="project" value="UniProtKB-KW"/>
</dbReference>
<dbReference type="GO" id="GO:0019825">
    <property type="term" value="F:oxygen binding"/>
    <property type="evidence" value="ECO:0007669"/>
    <property type="project" value="InterPro"/>
</dbReference>
<dbReference type="GO" id="GO:0005344">
    <property type="term" value="F:oxygen carrier activity"/>
    <property type="evidence" value="ECO:0007669"/>
    <property type="project" value="UniProtKB-KW"/>
</dbReference>
<dbReference type="CDD" id="cd01040">
    <property type="entry name" value="Mb-like"/>
    <property type="match status" value="1"/>
</dbReference>
<dbReference type="Gene3D" id="1.10.490.10">
    <property type="entry name" value="Globins"/>
    <property type="match status" value="1"/>
</dbReference>
<dbReference type="InterPro" id="IPR000971">
    <property type="entry name" value="Globin"/>
</dbReference>
<dbReference type="InterPro" id="IPR009050">
    <property type="entry name" value="Globin-like_sf"/>
</dbReference>
<dbReference type="InterPro" id="IPR012292">
    <property type="entry name" value="Globin/Proto"/>
</dbReference>
<dbReference type="InterPro" id="IPR044399">
    <property type="entry name" value="Mb-like_M"/>
</dbReference>
<dbReference type="Pfam" id="PF00042">
    <property type="entry name" value="Globin"/>
    <property type="match status" value="1"/>
</dbReference>
<dbReference type="SUPFAM" id="SSF46458">
    <property type="entry name" value="Globin-like"/>
    <property type="match status" value="1"/>
</dbReference>
<dbReference type="PROSITE" id="PS01033">
    <property type="entry name" value="GLOBIN"/>
    <property type="match status" value="1"/>
</dbReference>
<organism>
    <name type="scientific">Cerebratulus lacteus</name>
    <name type="common">Milky ribbon worm</name>
    <name type="synonym">Micrura lactea</name>
    <dbReference type="NCBI Taxonomy" id="6221"/>
    <lineage>
        <taxon>Eukaryota</taxon>
        <taxon>Metazoa</taxon>
        <taxon>Spiralia</taxon>
        <taxon>Lophotrochozoa</taxon>
        <taxon>Nemertea</taxon>
        <taxon>Pilidiophora</taxon>
        <taxon>Heteronemertea</taxon>
        <taxon>Lineidae</taxon>
        <taxon>Cerebratulus</taxon>
    </lineage>
</organism>
<keyword id="KW-0002">3D-structure</keyword>
<keyword id="KW-0903">Direct protein sequencing</keyword>
<keyword id="KW-0349">Heme</keyword>
<keyword id="KW-0408">Iron</keyword>
<keyword id="KW-0479">Metal-binding</keyword>
<keyword id="KW-0561">Oxygen transport</keyword>
<keyword id="KW-0813">Transport</keyword>
<sequence length="110" mass="11530">MVNWAAVVDDFYQELFKAHPEYQNKFGFKGVALGSLKGNAAYKTQAGKTVDYINAAIGGSADAAGLASRHKGRNVGSAEFHNAKACLAKACSAHGAPDLGHAIDDILSHL</sequence>
<proteinExistence type="evidence at protein level"/>
<feature type="initiator methionine" description="Removed" evidence="3">
    <location>
        <position position="1"/>
    </location>
</feature>
<feature type="chain" id="PRO_0000052499" description="Neural hemoglobin">
    <location>
        <begin position="2"/>
        <end position="110"/>
    </location>
</feature>
<feature type="domain" description="Globin" evidence="1">
    <location>
        <begin position="2"/>
        <end position="110"/>
    </location>
</feature>
<feature type="binding site" description="proximal binding residue">
    <location>
        <position position="70"/>
    </location>
    <ligand>
        <name>heme</name>
        <dbReference type="ChEBI" id="CHEBI:30413"/>
    </ligand>
    <ligandPart>
        <name>Fe</name>
        <dbReference type="ChEBI" id="CHEBI:18248"/>
    </ligandPart>
</feature>
<feature type="helix" evidence="5">
    <location>
        <begin position="4"/>
        <end position="18"/>
    </location>
</feature>
<feature type="helix" evidence="5">
    <location>
        <begin position="20"/>
        <end position="25"/>
    </location>
</feature>
<feature type="turn" evidence="5">
    <location>
        <begin position="27"/>
        <end position="30"/>
    </location>
</feature>
<feature type="helix" evidence="5">
    <location>
        <begin position="33"/>
        <end position="38"/>
    </location>
</feature>
<feature type="helix" evidence="5">
    <location>
        <begin position="40"/>
        <end position="58"/>
    </location>
</feature>
<feature type="helix" evidence="5">
    <location>
        <begin position="63"/>
        <end position="71"/>
    </location>
</feature>
<feature type="turn" evidence="5">
    <location>
        <begin position="72"/>
        <end position="74"/>
    </location>
</feature>
<feature type="helix" evidence="5">
    <location>
        <begin position="77"/>
        <end position="93"/>
    </location>
</feature>
<feature type="helix" evidence="5">
    <location>
        <begin position="100"/>
        <end position="107"/>
    </location>
</feature>
<evidence type="ECO:0000255" key="1">
    <source>
        <dbReference type="PROSITE-ProRule" id="PRU00238"/>
    </source>
</evidence>
<evidence type="ECO:0000269" key="2">
    <source>
    </source>
</evidence>
<evidence type="ECO:0000269" key="3">
    <source>
    </source>
</evidence>
<evidence type="ECO:0000305" key="4"/>
<evidence type="ECO:0007829" key="5">
    <source>
        <dbReference type="PDB" id="2XKI"/>
    </source>
</evidence>
<reference key="1">
    <citation type="journal article" date="1998" name="J. Biol. Chem.">
        <title>The mini-hemoglobins in neural and body wall tissue of the nemertean worm, Cerebratulus lacteus.</title>
        <authorList>
            <person name="Vandergon T.L."/>
            <person name="Riggs C.K."/>
            <person name="Gorr T.A."/>
            <person name="Colacino J.M."/>
            <person name="Riggs A.F."/>
        </authorList>
    </citation>
    <scope>NUCLEOTIDE SEQUENCE [GENOMIC DNA]</scope>
    <scope>PROTEIN SEQUENCE OF 2-44</scope>
    <scope>CHARACTERIZATION</scope>
    <source>
        <tissue>Brain</tissue>
    </source>
</reference>
<reference key="2">
    <citation type="journal article" date="2001" name="Acta Crystallogr. D">
        <title>Crystallization and preliminary X-ray analysis of neural haemoglobin from the nemertean worm Cerebratulus lacteus.</title>
        <authorList>
            <person name="Pesce A."/>
            <person name="Nardini M."/>
            <person name="Dewilde S."/>
            <person name="Ascenzi P."/>
            <person name="Riggs A.F."/>
            <person name="Yamauchi K."/>
            <person name="Geuens E."/>
            <person name="Moens L."/>
            <person name="Bolognesi M."/>
        </authorList>
    </citation>
    <scope>CRYSTALLIZATION</scope>
</reference>
<reference key="3">
    <citation type="journal article" date="2002" name="Structure">
        <title>The 109 residue nerve tissue minihemoglobin from Cerebratulus lacteus highlights striking structural plasticity of the alpha-helical globin fold.</title>
        <authorList>
            <person name="Pesce A."/>
            <person name="Nardini M."/>
            <person name="Dewilde S."/>
            <person name="Geuens E."/>
            <person name="Yamauchi K."/>
            <person name="Ascenzi P."/>
            <person name="Riggs A.F."/>
            <person name="Moens L."/>
            <person name="Bolognesi M."/>
        </authorList>
    </citation>
    <scope>X-RAY CRYSTALLOGRAPHY (1.5 ANGSTROMS) IN COMPLEX WITH HEME</scope>
</reference>
<accession>O76242</accession>
<name>GLBN_CERLA</name>